<organism>
    <name type="scientific">Bos taurus</name>
    <name type="common">Bovine</name>
    <dbReference type="NCBI Taxonomy" id="9913"/>
    <lineage>
        <taxon>Eukaryota</taxon>
        <taxon>Metazoa</taxon>
        <taxon>Chordata</taxon>
        <taxon>Craniata</taxon>
        <taxon>Vertebrata</taxon>
        <taxon>Euteleostomi</taxon>
        <taxon>Mammalia</taxon>
        <taxon>Eutheria</taxon>
        <taxon>Laurasiatheria</taxon>
        <taxon>Artiodactyla</taxon>
        <taxon>Ruminantia</taxon>
        <taxon>Pecora</taxon>
        <taxon>Bovidae</taxon>
        <taxon>Bovinae</taxon>
        <taxon>Bos</taxon>
    </lineage>
</organism>
<accession>Q28031</accession>
<gene>
    <name type="primary">LPAR1</name>
    <name type="synonym">EDG2</name>
    <name type="synonym">LPA1</name>
</gene>
<evidence type="ECO:0000250" key="1">
    <source>
        <dbReference type="UniProtKB" id="P61793"/>
    </source>
</evidence>
<evidence type="ECO:0000250" key="2">
    <source>
        <dbReference type="UniProtKB" id="Q92633"/>
    </source>
</evidence>
<evidence type="ECO:0000255" key="3"/>
<evidence type="ECO:0000255" key="4">
    <source>
        <dbReference type="PROSITE-ProRule" id="PRU00521"/>
    </source>
</evidence>
<evidence type="ECO:0000303" key="5">
    <source>
    </source>
</evidence>
<feature type="chain" id="PRO_0000069416" description="Lysophosphatidic acid receptor 1">
    <location>
        <begin position="1"/>
        <end position="364"/>
    </location>
</feature>
<feature type="topological domain" description="Extracellular" evidence="2">
    <location>
        <begin position="1"/>
        <end position="50"/>
    </location>
</feature>
<feature type="transmembrane region" description="Helical; Name=1" evidence="2">
    <location>
        <begin position="51"/>
        <end position="75"/>
    </location>
</feature>
<feature type="topological domain" description="Cytoplasmic" evidence="2">
    <location>
        <begin position="76"/>
        <end position="83"/>
    </location>
</feature>
<feature type="transmembrane region" description="Helical; Name=2" evidence="2">
    <location>
        <begin position="84"/>
        <end position="107"/>
    </location>
</feature>
<feature type="topological domain" description="Extracellular" evidence="2">
    <location>
        <begin position="108"/>
        <end position="121"/>
    </location>
</feature>
<feature type="transmembrane region" description="Helical; Name=3" evidence="2">
    <location>
        <begin position="122"/>
        <end position="144"/>
    </location>
</feature>
<feature type="topological domain" description="Cytoplasmic" evidence="2">
    <location>
        <begin position="145"/>
        <end position="163"/>
    </location>
</feature>
<feature type="transmembrane region" description="Helical; Name=4" evidence="2">
    <location>
        <begin position="164"/>
        <end position="184"/>
    </location>
</feature>
<feature type="topological domain" description="Extracellular" evidence="2">
    <location>
        <begin position="185"/>
        <end position="204"/>
    </location>
</feature>
<feature type="transmembrane region" description="Helical; Name=5" evidence="2">
    <location>
        <begin position="205"/>
        <end position="225"/>
    </location>
</feature>
<feature type="topological domain" description="Cytoplasmic" evidence="2">
    <location>
        <begin position="226"/>
        <end position="255"/>
    </location>
</feature>
<feature type="transmembrane region" description="Helical; Name=6" evidence="2">
    <location>
        <begin position="256"/>
        <end position="280"/>
    </location>
</feature>
<feature type="topological domain" description="Extracellular" evidence="2">
    <location>
        <begin position="281"/>
        <end position="294"/>
    </location>
</feature>
<feature type="transmembrane region" description="Helical; Name=7" evidence="2">
    <location>
        <begin position="295"/>
        <end position="315"/>
    </location>
</feature>
<feature type="topological domain" description="Cytoplasmic" evidence="2">
    <location>
        <begin position="316"/>
        <end position="364"/>
    </location>
</feature>
<feature type="binding site" evidence="2">
    <location>
        <position position="39"/>
    </location>
    <ligand>
        <name>a 1-acyl-sn-glycero-3-phosphate</name>
        <dbReference type="ChEBI" id="CHEBI:57970"/>
    </ligand>
</feature>
<feature type="binding site" evidence="2">
    <location>
        <begin position="124"/>
        <end position="129"/>
    </location>
    <ligand>
        <name>a 1-acyl-sn-glycero-3-phosphate</name>
        <dbReference type="ChEBI" id="CHEBI:57970"/>
    </ligand>
</feature>
<feature type="binding site" evidence="2">
    <location>
        <position position="210"/>
    </location>
    <ligand>
        <name>a 1-acyl-sn-glycero-3-phosphate</name>
        <dbReference type="ChEBI" id="CHEBI:57970"/>
    </ligand>
</feature>
<feature type="modified residue" description="Phosphoserine" evidence="2">
    <location>
        <position position="341"/>
    </location>
</feature>
<feature type="modified residue" description="Phosphothreonine" evidence="1">
    <location>
        <position position="351"/>
    </location>
</feature>
<feature type="glycosylation site" description="N-linked (GlcNAc...) asparagine" evidence="3">
    <location>
        <position position="27"/>
    </location>
</feature>
<feature type="glycosylation site" description="N-linked (GlcNAc...) asparagine" evidence="3">
    <location>
        <position position="35"/>
    </location>
</feature>
<feature type="disulfide bond" evidence="2">
    <location>
        <begin position="24"/>
        <end position="190"/>
    </location>
</feature>
<feature type="disulfide bond" evidence="2">
    <location>
        <begin position="188"/>
        <end position="195"/>
    </location>
</feature>
<feature type="disulfide bond" evidence="2">
    <location>
        <begin position="284"/>
        <end position="287"/>
    </location>
</feature>
<dbReference type="EMBL" id="U48236">
    <property type="protein sequence ID" value="AAC48695.1"/>
    <property type="molecule type" value="mRNA"/>
</dbReference>
<dbReference type="RefSeq" id="NP_776472.1">
    <property type="nucleotide sequence ID" value="NM_174047.2"/>
</dbReference>
<dbReference type="SMR" id="Q28031"/>
<dbReference type="FunCoup" id="Q28031">
    <property type="interactions" value="616"/>
</dbReference>
<dbReference type="STRING" id="9913.ENSBTAP00000059470"/>
<dbReference type="GlyCosmos" id="Q28031">
    <property type="glycosylation" value="2 sites, No reported glycans"/>
</dbReference>
<dbReference type="GlyGen" id="Q28031">
    <property type="glycosylation" value="2 sites"/>
</dbReference>
<dbReference type="PaxDb" id="9913-ENSBTAP00000012721"/>
<dbReference type="GeneID" id="281136"/>
<dbReference type="KEGG" id="bta:281136"/>
<dbReference type="CTD" id="1902"/>
<dbReference type="eggNOG" id="KOG3656">
    <property type="taxonomic scope" value="Eukaryota"/>
</dbReference>
<dbReference type="InParanoid" id="Q28031"/>
<dbReference type="OrthoDB" id="5987098at2759"/>
<dbReference type="Proteomes" id="UP000009136">
    <property type="component" value="Unplaced"/>
</dbReference>
<dbReference type="GO" id="GO:0009986">
    <property type="term" value="C:cell surface"/>
    <property type="evidence" value="ECO:0000250"/>
    <property type="project" value="UniProtKB"/>
</dbReference>
<dbReference type="GO" id="GO:0005737">
    <property type="term" value="C:cytoplasm"/>
    <property type="evidence" value="ECO:0000318"/>
    <property type="project" value="GO_Central"/>
</dbReference>
<dbReference type="GO" id="GO:0005768">
    <property type="term" value="C:endosome"/>
    <property type="evidence" value="ECO:0007669"/>
    <property type="project" value="UniProtKB-SubCell"/>
</dbReference>
<dbReference type="GO" id="GO:0005886">
    <property type="term" value="C:plasma membrane"/>
    <property type="evidence" value="ECO:0000250"/>
    <property type="project" value="UniProtKB"/>
</dbReference>
<dbReference type="GO" id="GO:0070915">
    <property type="term" value="F:lysophosphatidic acid receptor activity"/>
    <property type="evidence" value="ECO:0000250"/>
    <property type="project" value="UniProtKB"/>
</dbReference>
<dbReference type="GO" id="GO:0007189">
    <property type="term" value="P:adenylate cyclase-activating G protein-coupled receptor signaling pathway"/>
    <property type="evidence" value="ECO:0000318"/>
    <property type="project" value="GO_Central"/>
</dbReference>
<dbReference type="GO" id="GO:0007193">
    <property type="term" value="P:adenylate cyclase-inhibiting G protein-coupled receptor signaling pathway"/>
    <property type="evidence" value="ECO:0000250"/>
    <property type="project" value="UniProtKB"/>
</dbReference>
<dbReference type="GO" id="GO:1902018">
    <property type="term" value="P:negative regulation of cilium assembly"/>
    <property type="evidence" value="ECO:0000250"/>
    <property type="project" value="UniProtKB"/>
</dbReference>
<dbReference type="GO" id="GO:0010977">
    <property type="term" value="P:negative regulation of neuron projection development"/>
    <property type="evidence" value="ECO:0000250"/>
    <property type="project" value="UniProtKB"/>
</dbReference>
<dbReference type="GO" id="GO:0022008">
    <property type="term" value="P:neurogenesis"/>
    <property type="evidence" value="ECO:0000318"/>
    <property type="project" value="GO_Central"/>
</dbReference>
<dbReference type="GO" id="GO:0043410">
    <property type="term" value="P:positive regulation of MAPK cascade"/>
    <property type="evidence" value="ECO:0000250"/>
    <property type="project" value="UniProtKB"/>
</dbReference>
<dbReference type="GO" id="GO:0035025">
    <property type="term" value="P:positive regulation of Rho protein signal transduction"/>
    <property type="evidence" value="ECO:0000250"/>
    <property type="project" value="UniProtKB"/>
</dbReference>
<dbReference type="GO" id="GO:0051496">
    <property type="term" value="P:positive regulation of stress fiber assembly"/>
    <property type="evidence" value="ECO:0000250"/>
    <property type="project" value="UniProtKB"/>
</dbReference>
<dbReference type="GO" id="GO:0008360">
    <property type="term" value="P:regulation of cell shape"/>
    <property type="evidence" value="ECO:0000250"/>
    <property type="project" value="UniProtKB"/>
</dbReference>
<dbReference type="GO" id="GO:0019222">
    <property type="term" value="P:regulation of metabolic process"/>
    <property type="evidence" value="ECO:0000318"/>
    <property type="project" value="GO_Central"/>
</dbReference>
<dbReference type="CDD" id="cd15344">
    <property type="entry name" value="7tmA_LPAR1_Edg2"/>
    <property type="match status" value="1"/>
</dbReference>
<dbReference type="FunFam" id="1.20.1070.10:FF:000025">
    <property type="entry name" value="Lysophosphatidic acid receptor 1"/>
    <property type="match status" value="1"/>
</dbReference>
<dbReference type="Gene3D" id="1.20.1070.10">
    <property type="entry name" value="Rhodopsin 7-helix transmembrane proteins"/>
    <property type="match status" value="1"/>
</dbReference>
<dbReference type="InterPro" id="IPR000276">
    <property type="entry name" value="GPCR_Rhodpsn"/>
</dbReference>
<dbReference type="InterPro" id="IPR017452">
    <property type="entry name" value="GPCR_Rhodpsn_7TM"/>
</dbReference>
<dbReference type="InterPro" id="IPR004065">
    <property type="entry name" value="LPA_rcpt"/>
</dbReference>
<dbReference type="InterPro" id="IPR002277">
    <property type="entry name" value="LPA_rcpt_EDG2"/>
</dbReference>
<dbReference type="PANTHER" id="PTHR22750">
    <property type="entry name" value="G-PROTEIN COUPLED RECEPTOR"/>
    <property type="match status" value="1"/>
</dbReference>
<dbReference type="Pfam" id="PF00001">
    <property type="entry name" value="7tm_1"/>
    <property type="match status" value="1"/>
</dbReference>
<dbReference type="PRINTS" id="PR01148">
    <property type="entry name" value="EDG2RECEPTOR"/>
</dbReference>
<dbReference type="PRINTS" id="PR00237">
    <property type="entry name" value="GPCRRHODOPSN"/>
</dbReference>
<dbReference type="PRINTS" id="PR01527">
    <property type="entry name" value="LPARECEPTOR"/>
</dbReference>
<dbReference type="SMART" id="SM01381">
    <property type="entry name" value="7TM_GPCR_Srsx"/>
    <property type="match status" value="1"/>
</dbReference>
<dbReference type="SUPFAM" id="SSF81321">
    <property type="entry name" value="Family A G protein-coupled receptor-like"/>
    <property type="match status" value="1"/>
</dbReference>
<dbReference type="PROSITE" id="PS00237">
    <property type="entry name" value="G_PROTEIN_RECEP_F1_1"/>
    <property type="match status" value="1"/>
</dbReference>
<dbReference type="PROSITE" id="PS50262">
    <property type="entry name" value="G_PROTEIN_RECEP_F1_2"/>
    <property type="match status" value="1"/>
</dbReference>
<sequence>MAAAFTSSPVVSQPQFTAMNEQQCFSNESIAFFYNRSGKYLATEWNTVTKLVMGLGITVCIFIMLANLLVMVAIYVNRRFHFPIYYLMANLAAADFFAGLAYFYLMFNTGPNTRRLTVSTWLLRQGLIDTSLTVSVANLLAIAIERHITVFRMQLHARMSNRRVVVVIVVIWTMAIVMGAIPSVGWNCICDIENCSNMAPLYSDSYLVFWAIFNLVTFVVMVVLYAHIFGYVRQRTMRMSRHSSGPRRNRDTMMSLLKTVVIVLGAFIICWTPGLVLLLLDVCCPQCDVLAYEKFFLLLAEFNSAMNPIIYSYRDKEMSATFRQILCCQRSENTSGPTEGSDRSASSLNHTILAGVHSNDHSVV</sequence>
<proteinExistence type="evidence at transcript level"/>
<comment type="function">
    <text evidence="1 2">Receptor for lysophosphatidic acid (LPA). Plays a role in the reorganization of the actin cytoskeleton, cell migration, differentiation and proliferation, and thereby contributes to the responses to tissue damage and infectious agents. Activates downstream signaling cascades via the G(i)/G(o), G(12)/G(13), and G(q) families of heteromeric G proteins. Signaling inhibits adenylyl cyclase activity and decreases cellular cAMP levels. Signaling triggers an increase of cytoplasmic Ca(2+) levels. Activates RALA; this leads to the activation of phospholipase C (PLC) and the formation of inositol 1,4,5-trisphosphate. Signaling mediates activation of down-stream MAP kinases. Contributes to the regulation of cell shape. Promotes Rho-dependent reorganization of the actin cytoskeleton in neuronal cells and neurite retraction. Promotes the activation of Rho and the formation of actin stress fibers. Promotes formation of lamellipodia at the leading edge of migrating cells via activation of RAC1. Through its function as LPA receptor, plays a role in chemotaxis and cell migration, including responses to injury and wounding. Plays a role in triggering inflammation in response to bacterial lipopolysaccharide (LPS) via its interaction with CD14. Promotes cell proliferation in response to LPA. Inhibits the intracellular ciliogenesis pathway in response to LPA and through AKT1 activation (By similarity). Required for normal skeleton development. May play a role in osteoblast differentiation. Required for normal brain development. Required for normal proliferation, survival and maturation of newly formed neurons in the adult dentate gyrus. Plays a role in pain perception and in the initiation of neuropathic pain.</text>
</comment>
<comment type="subunit">
    <text evidence="1 2">Interacts with RALA and GRK2 (By similarity). Interacts with GNAQ and GNA13. Interacts with CD14; the interaction is enhanced by exposure to bacterial lipopolysaccharide (LPS) (By similarity).</text>
</comment>
<comment type="subcellular location">
    <subcellularLocation>
        <location evidence="1">Cell surface</location>
    </subcellularLocation>
    <subcellularLocation>
        <location evidence="1">Cell membrane</location>
        <topology evidence="2">Multi-pass membrane protein</topology>
    </subcellularLocation>
    <subcellularLocation>
        <location evidence="1 2">Endosome</location>
    </subcellularLocation>
    <text evidence="1 2">Prior to LPA treatment found predominantly at the cell surface. Internalized after LPA treatment. Colocalizes with RALA in endocytic vesicles after LPA treatment.</text>
</comment>
<comment type="PTM">
    <text evidence="2">N-glycosylated.</text>
</comment>
<comment type="similarity">
    <text evidence="4">Belongs to the G-protein coupled receptor 1 family.</text>
</comment>
<keyword id="KW-1003">Cell membrane</keyword>
<keyword id="KW-1015">Disulfide bond</keyword>
<keyword id="KW-0967">Endosome</keyword>
<keyword id="KW-0297">G-protein coupled receptor</keyword>
<keyword id="KW-0325">Glycoprotein</keyword>
<keyword id="KW-0472">Membrane</keyword>
<keyword id="KW-0597">Phosphoprotein</keyword>
<keyword id="KW-0675">Receptor</keyword>
<keyword id="KW-1185">Reference proteome</keyword>
<keyword id="KW-0807">Transducer</keyword>
<keyword id="KW-0812">Transmembrane</keyword>
<keyword id="KW-1133">Transmembrane helix</keyword>
<name>LPAR1_BOVIN</name>
<protein>
    <recommendedName>
        <fullName>Lysophosphatidic acid receptor 1</fullName>
        <shortName>LPA receptor 1</shortName>
        <shortName>LPA-1</shortName>
    </recommendedName>
    <alternativeName>
        <fullName>Lysophosphatidic acid receptor Edg-2</fullName>
    </alternativeName>
    <alternativeName>
        <fullName evidence="5">Rec1.3</fullName>
    </alternativeName>
</protein>
<reference key="1">
    <citation type="journal article" date="1996" name="Brain Res. Mol. Brain Res.">
        <title>Cloning, characterization, and chromosomal localization of rec1.3, a member of the G-protein-coupled receptor family highly expressed in brain.</title>
        <authorList>
            <person name="Macrae A.D."/>
            <person name="Premont R.T."/>
            <person name="Jaber M."/>
            <person name="Petersen A.S."/>
            <person name="Lefkowitz R.J."/>
        </authorList>
    </citation>
    <scope>NUCLEOTIDE SEQUENCE [MRNA]</scope>
    <source>
        <tissue>Brain</tissue>
    </source>
</reference>